<organism>
    <name type="scientific">Yersinia pestis</name>
    <dbReference type="NCBI Taxonomy" id="632"/>
    <lineage>
        <taxon>Bacteria</taxon>
        <taxon>Pseudomonadati</taxon>
        <taxon>Pseudomonadota</taxon>
        <taxon>Gammaproteobacteria</taxon>
        <taxon>Enterobacterales</taxon>
        <taxon>Yersiniaceae</taxon>
        <taxon>Yersinia</taxon>
    </lineage>
</organism>
<protein>
    <recommendedName>
        <fullName evidence="2">RNA-binding protein Hfq</fullName>
    </recommendedName>
    <alternativeName>
        <fullName>Yersinia multiple regulator</fullName>
    </alternativeName>
    <alternativeName>
        <fullName>Yersinia regulator for pleiotropic phenotype</fullName>
    </alternativeName>
</protein>
<proteinExistence type="inferred from homology"/>
<comment type="function">
    <text evidence="2">RNA chaperone that binds small regulatory RNA (sRNAs) and mRNAs to facilitate mRNA translational regulation in response to envelope stress, environmental stress and changes in metabolite concentrations. Also binds with high specificity to tRNAs.</text>
</comment>
<comment type="subunit">
    <text evidence="2">Homohexamer.</text>
</comment>
<comment type="similarity">
    <text evidence="2">Belongs to the Hfq family.</text>
</comment>
<evidence type="ECO:0000250" key="1"/>
<evidence type="ECO:0000255" key="2">
    <source>
        <dbReference type="HAMAP-Rule" id="MF_00436"/>
    </source>
</evidence>
<evidence type="ECO:0000255" key="3">
    <source>
        <dbReference type="PROSITE-ProRule" id="PRU01346"/>
    </source>
</evidence>
<evidence type="ECO:0000256" key="4">
    <source>
        <dbReference type="SAM" id="MobiDB-lite"/>
    </source>
</evidence>
<reference key="1">
    <citation type="journal article" date="2001" name="Nature">
        <title>Genome sequence of Yersinia pestis, the causative agent of plague.</title>
        <authorList>
            <person name="Parkhill J."/>
            <person name="Wren B.W."/>
            <person name="Thomson N.R."/>
            <person name="Titball R.W."/>
            <person name="Holden M.T.G."/>
            <person name="Prentice M.B."/>
            <person name="Sebaihia M."/>
            <person name="James K.D."/>
            <person name="Churcher C.M."/>
            <person name="Mungall K.L."/>
            <person name="Baker S."/>
            <person name="Basham D."/>
            <person name="Bentley S.D."/>
            <person name="Brooks K."/>
            <person name="Cerdeno-Tarraga A.-M."/>
            <person name="Chillingworth T."/>
            <person name="Cronin A."/>
            <person name="Davies R.M."/>
            <person name="Davis P."/>
            <person name="Dougan G."/>
            <person name="Feltwell T."/>
            <person name="Hamlin N."/>
            <person name="Holroyd S."/>
            <person name="Jagels K."/>
            <person name="Karlyshev A.V."/>
            <person name="Leather S."/>
            <person name="Moule S."/>
            <person name="Oyston P.C.F."/>
            <person name="Quail M.A."/>
            <person name="Rutherford K.M."/>
            <person name="Simmonds M."/>
            <person name="Skelton J."/>
            <person name="Stevens K."/>
            <person name="Whitehead S."/>
            <person name="Barrell B.G."/>
        </authorList>
    </citation>
    <scope>NUCLEOTIDE SEQUENCE [LARGE SCALE GENOMIC DNA]</scope>
    <source>
        <strain>CO-92 / Biovar Orientalis</strain>
    </source>
</reference>
<reference key="2">
    <citation type="journal article" date="2002" name="J. Bacteriol.">
        <title>Genome sequence of Yersinia pestis KIM.</title>
        <authorList>
            <person name="Deng W."/>
            <person name="Burland V."/>
            <person name="Plunkett G. III"/>
            <person name="Boutin A."/>
            <person name="Mayhew G.F."/>
            <person name="Liss P."/>
            <person name="Perna N.T."/>
            <person name="Rose D.J."/>
            <person name="Mau B."/>
            <person name="Zhou S."/>
            <person name="Schwartz D.C."/>
            <person name="Fetherston J.D."/>
            <person name="Lindler L.E."/>
            <person name="Brubaker R.R."/>
            <person name="Plano G.V."/>
            <person name="Straley S.C."/>
            <person name="McDonough K.A."/>
            <person name="Nilles M.L."/>
            <person name="Matson J.S."/>
            <person name="Blattner F.R."/>
            <person name="Perry R.D."/>
        </authorList>
    </citation>
    <scope>NUCLEOTIDE SEQUENCE [LARGE SCALE GENOMIC DNA]</scope>
    <source>
        <strain>KIM10+ / Biovar Mediaevalis</strain>
    </source>
</reference>
<reference key="3">
    <citation type="journal article" date="2004" name="DNA Res.">
        <title>Complete genome sequence of Yersinia pestis strain 91001, an isolate avirulent to humans.</title>
        <authorList>
            <person name="Song Y."/>
            <person name="Tong Z."/>
            <person name="Wang J."/>
            <person name="Wang L."/>
            <person name="Guo Z."/>
            <person name="Han Y."/>
            <person name="Zhang J."/>
            <person name="Pei D."/>
            <person name="Zhou D."/>
            <person name="Qin H."/>
            <person name="Pang X."/>
            <person name="Han Y."/>
            <person name="Zhai J."/>
            <person name="Li M."/>
            <person name="Cui B."/>
            <person name="Qi Z."/>
            <person name="Jin L."/>
            <person name="Dai R."/>
            <person name="Chen F."/>
            <person name="Li S."/>
            <person name="Ye C."/>
            <person name="Du Z."/>
            <person name="Lin W."/>
            <person name="Wang J."/>
            <person name="Yu J."/>
            <person name="Yang H."/>
            <person name="Wang J."/>
            <person name="Huang P."/>
            <person name="Yang R."/>
        </authorList>
    </citation>
    <scope>NUCLEOTIDE SEQUENCE [LARGE SCALE GENOMIC DNA]</scope>
    <source>
        <strain>91001 / Biovar Mediaevalis</strain>
    </source>
</reference>
<sequence length="101" mass="11130">MAKGQSLQDPFLNALRRERVPVSIYLVNGIKLQGQVESFDQFVILLKNTVSQMVYKHAISTVVPSRPVSHHSNTPSGSTNNYHGSNPSAPQQPQQDSDDAE</sequence>
<name>HFQ_YERPE</name>
<keyword id="KW-1185">Reference proteome</keyword>
<keyword id="KW-0694">RNA-binding</keyword>
<keyword id="KW-0346">Stress response</keyword>
<accession>Q8ZIW2</accession>
<accession>Q0WJT7</accession>
<dbReference type="EMBL" id="AL590842">
    <property type="protein sequence ID" value="CAL19055.1"/>
    <property type="molecule type" value="Genomic_DNA"/>
</dbReference>
<dbReference type="EMBL" id="AE009952">
    <property type="protein sequence ID" value="AAM84218.1"/>
    <property type="molecule type" value="Genomic_DNA"/>
</dbReference>
<dbReference type="EMBL" id="AE017042">
    <property type="protein sequence ID" value="AAS60799.1"/>
    <property type="molecule type" value="Genomic_DNA"/>
</dbReference>
<dbReference type="PIR" id="AE0046">
    <property type="entry name" value="AE0046"/>
</dbReference>
<dbReference type="RefSeq" id="WP_002209151.1">
    <property type="nucleotide sequence ID" value="NZ_WUCM01000083.1"/>
</dbReference>
<dbReference type="RefSeq" id="YP_002345451.1">
    <property type="nucleotide sequence ID" value="NC_003143.1"/>
</dbReference>
<dbReference type="SMR" id="Q8ZIW2"/>
<dbReference type="STRING" id="214092.YPO0373"/>
<dbReference type="PaxDb" id="214092-YPO0373"/>
<dbReference type="DNASU" id="1145577"/>
<dbReference type="EnsemblBacteria" id="AAS60799">
    <property type="protein sequence ID" value="AAS60799"/>
    <property type="gene ID" value="YP_0529"/>
</dbReference>
<dbReference type="GeneID" id="58049160"/>
<dbReference type="KEGG" id="ype:YPO0373"/>
<dbReference type="KEGG" id="ypk:y0630"/>
<dbReference type="KEGG" id="ypm:YP_0529"/>
<dbReference type="PATRIC" id="fig|214092.21.peg.610"/>
<dbReference type="eggNOG" id="COG1923">
    <property type="taxonomic scope" value="Bacteria"/>
</dbReference>
<dbReference type="HOGENOM" id="CLU_113688_2_1_6"/>
<dbReference type="OMA" id="QQMVYKH"/>
<dbReference type="OrthoDB" id="9799751at2"/>
<dbReference type="PHI-base" id="PHI:4064"/>
<dbReference type="Proteomes" id="UP000000815">
    <property type="component" value="Chromosome"/>
</dbReference>
<dbReference type="Proteomes" id="UP000001019">
    <property type="component" value="Chromosome"/>
</dbReference>
<dbReference type="Proteomes" id="UP000002490">
    <property type="component" value="Chromosome"/>
</dbReference>
<dbReference type="GO" id="GO:0005829">
    <property type="term" value="C:cytosol"/>
    <property type="evidence" value="ECO:0000318"/>
    <property type="project" value="GO_Central"/>
</dbReference>
<dbReference type="GO" id="GO:0003723">
    <property type="term" value="F:RNA binding"/>
    <property type="evidence" value="ECO:0000318"/>
    <property type="project" value="GO_Central"/>
</dbReference>
<dbReference type="GO" id="GO:0006355">
    <property type="term" value="P:regulation of DNA-templated transcription"/>
    <property type="evidence" value="ECO:0007669"/>
    <property type="project" value="InterPro"/>
</dbReference>
<dbReference type="GO" id="GO:0043487">
    <property type="term" value="P:regulation of RNA stability"/>
    <property type="evidence" value="ECO:0000318"/>
    <property type="project" value="GO_Central"/>
</dbReference>
<dbReference type="GO" id="GO:0045974">
    <property type="term" value="P:regulation of translation, ncRNA-mediated"/>
    <property type="evidence" value="ECO:0000318"/>
    <property type="project" value="GO_Central"/>
</dbReference>
<dbReference type="CDD" id="cd01716">
    <property type="entry name" value="Hfq"/>
    <property type="match status" value="1"/>
</dbReference>
<dbReference type="FunFam" id="2.30.30.100:FF:000001">
    <property type="entry name" value="RNA-binding protein Hfq"/>
    <property type="match status" value="1"/>
</dbReference>
<dbReference type="Gene3D" id="2.30.30.100">
    <property type="match status" value="1"/>
</dbReference>
<dbReference type="HAMAP" id="MF_00436">
    <property type="entry name" value="Hfq"/>
    <property type="match status" value="1"/>
</dbReference>
<dbReference type="InterPro" id="IPR005001">
    <property type="entry name" value="Hfq"/>
</dbReference>
<dbReference type="InterPro" id="IPR010920">
    <property type="entry name" value="LSM_dom_sf"/>
</dbReference>
<dbReference type="InterPro" id="IPR047575">
    <property type="entry name" value="Sm"/>
</dbReference>
<dbReference type="NCBIfam" id="TIGR02383">
    <property type="entry name" value="Hfq"/>
    <property type="match status" value="1"/>
</dbReference>
<dbReference type="NCBIfam" id="NF001602">
    <property type="entry name" value="PRK00395.1"/>
    <property type="match status" value="1"/>
</dbReference>
<dbReference type="PANTHER" id="PTHR34772">
    <property type="entry name" value="RNA-BINDING PROTEIN HFQ"/>
    <property type="match status" value="1"/>
</dbReference>
<dbReference type="PANTHER" id="PTHR34772:SF1">
    <property type="entry name" value="RNA-BINDING PROTEIN HFQ"/>
    <property type="match status" value="1"/>
</dbReference>
<dbReference type="Pfam" id="PF17209">
    <property type="entry name" value="Hfq"/>
    <property type="match status" value="1"/>
</dbReference>
<dbReference type="SUPFAM" id="SSF50182">
    <property type="entry name" value="Sm-like ribonucleoproteins"/>
    <property type="match status" value="1"/>
</dbReference>
<dbReference type="PROSITE" id="PS52002">
    <property type="entry name" value="SM"/>
    <property type="match status" value="1"/>
</dbReference>
<feature type="initiator methionine" description="Removed" evidence="1">
    <location>
        <position position="1"/>
    </location>
</feature>
<feature type="chain" id="PRO_0000095609" description="RNA-binding protein Hfq">
    <location>
        <begin position="2"/>
        <end position="101"/>
    </location>
</feature>
<feature type="domain" description="Sm" evidence="3">
    <location>
        <begin position="9"/>
        <end position="68"/>
    </location>
</feature>
<feature type="region of interest" description="Disordered" evidence="4">
    <location>
        <begin position="63"/>
        <end position="101"/>
    </location>
</feature>
<feature type="compositionally biased region" description="Polar residues" evidence="4">
    <location>
        <begin position="70"/>
        <end position="86"/>
    </location>
</feature>
<gene>
    <name evidence="2" type="primary">hfq</name>
    <name type="synonym">ymr</name>
    <name type="ordered locus">YPO0373</name>
    <name type="ordered locus">y0630</name>
    <name type="ordered locus">YP_0529</name>
</gene>